<reference key="1">
    <citation type="journal article" date="2003" name="J. Biol. Chem.">
        <title>Transcriptional regulation of biomass-degrading enzymes in the filamentous fungus Trichoderma reesei.</title>
        <authorList>
            <person name="Foreman P.K."/>
            <person name="Brown D."/>
            <person name="Dankmeyer L."/>
            <person name="Dean R."/>
            <person name="Diener S."/>
            <person name="Dunn-Coleman N.S."/>
            <person name="Goedegebuur F."/>
            <person name="Houfek T.D."/>
            <person name="England G.J."/>
            <person name="Kelley A.S."/>
            <person name="Meerman H.J."/>
            <person name="Mitchell T."/>
            <person name="Mitchinson C."/>
            <person name="Olivares H.A."/>
            <person name="Teunissen P.J.M."/>
            <person name="Yao J."/>
            <person name="Ward M."/>
        </authorList>
    </citation>
    <scope>NUCLEOTIDE SEQUENCE [MRNA]</scope>
    <scope>INDUCTION</scope>
    <source>
        <strain>QM6a</strain>
    </source>
</reference>
<reference key="2">
    <citation type="journal article" date="2008" name="Nat. Biotechnol.">
        <title>Genome sequencing and analysis of the biomass-degrading fungus Trichoderma reesei (syn. Hypocrea jecorina).</title>
        <authorList>
            <person name="Martinez D."/>
            <person name="Berka R.M."/>
            <person name="Henrissat B."/>
            <person name="Saloheimo M."/>
            <person name="Arvas M."/>
            <person name="Baker S.E."/>
            <person name="Chapman J."/>
            <person name="Chertkov O."/>
            <person name="Coutinho P.M."/>
            <person name="Cullen D."/>
            <person name="Danchin E.G."/>
            <person name="Grigoriev I.V."/>
            <person name="Harris P."/>
            <person name="Jackson M."/>
            <person name="Kubicek C.P."/>
            <person name="Han C.S."/>
            <person name="Ho I."/>
            <person name="Larrondo L.F."/>
            <person name="de Leon A.L."/>
            <person name="Magnuson J.K."/>
            <person name="Merino S."/>
            <person name="Misra M."/>
            <person name="Nelson B."/>
            <person name="Putnam N."/>
            <person name="Robbertse B."/>
            <person name="Salamov A.A."/>
            <person name="Schmoll M."/>
            <person name="Terry A."/>
            <person name="Thayer N."/>
            <person name="Westerholm-Parvinen A."/>
            <person name="Schoch C.L."/>
            <person name="Yao J."/>
            <person name="Barabote R."/>
            <person name="Nelson M.A."/>
            <person name="Detter C."/>
            <person name="Bruce D."/>
            <person name="Kuske C.R."/>
            <person name="Xie G."/>
            <person name="Richardson P."/>
            <person name="Rokhsar D.S."/>
            <person name="Lucas S.M."/>
            <person name="Rubin E.M."/>
            <person name="Dunn-Coleman N."/>
            <person name="Ward M."/>
            <person name="Brettin T.S."/>
        </authorList>
    </citation>
    <scope>NUCLEOTIDE SEQUENCE [LARGE SCALE GENOMIC DNA]</scope>
    <source>
        <strain>QM6a</strain>
    </source>
</reference>
<reference evidence="9" key="3">
    <citation type="journal article" date="2008" name="J. Mol. Biol.">
        <title>The first structure of a glycoside hydrolase family 61 member, Cel61B from Hypocrea jecorina, at 1.6 A resolution.</title>
        <authorList>
            <person name="Karkehabadi S."/>
            <person name="Hansson H."/>
            <person name="Kim S."/>
            <person name="Piens K."/>
            <person name="Mitchinson C."/>
            <person name="Sandgren M."/>
        </authorList>
    </citation>
    <scope>X-RAY CRYSTALLOGRAPHY (1.6 ANGSTROMS) OF 20-249</scope>
    <scope>SUBUNIT</scope>
    <scope>CATALYTIC ACTIVITY</scope>
    <scope>SUBCELLULAR LOCATION</scope>
    <source>
        <strain>QM6a</strain>
    </source>
</reference>
<gene>
    <name evidence="6" type="primary">cel61b</name>
    <name type="synonym">egl7</name>
    <name type="ORF">TRIREDRAFT_120961</name>
</gene>
<protein>
    <recommendedName>
        <fullName evidence="6">AA9 family lytic polysaccharide monooxygenase cel61B</fullName>
        <shortName evidence="6">LPMO9 cel61B</shortName>
        <ecNumber evidence="5">1.14.99.56</ecNumber>
    </recommendedName>
    <alternativeName>
        <fullName evidence="6">Cellulase-61B</fullName>
        <shortName evidence="6">Cel61B</shortName>
    </alternativeName>
    <alternativeName>
        <fullName evidence="7">Endo-beta-1,4-glucanase cel61B</fullName>
        <shortName evidence="7">Endoglucanase cel61B</shortName>
    </alternativeName>
    <alternativeName>
        <fullName>Endoglucanase-7</fullName>
    </alternativeName>
    <alternativeName>
        <fullName evidence="7">Glycosyl hydrolase 61 family protein cel61B</fullName>
    </alternativeName>
</protein>
<keyword id="KW-0002">3D-structure</keyword>
<keyword id="KW-0106">Calcium</keyword>
<keyword id="KW-0119">Carbohydrate metabolism</keyword>
<keyword id="KW-0136">Cellulose degradation</keyword>
<keyword id="KW-1015">Disulfide bond</keyword>
<keyword id="KW-0325">Glycoprotein</keyword>
<keyword id="KW-0479">Metal-binding</keyword>
<keyword id="KW-0503">Monooxygenase</keyword>
<keyword id="KW-0560">Oxidoreductase</keyword>
<keyword id="KW-0624">Polysaccharide degradation</keyword>
<keyword id="KW-1185">Reference proteome</keyword>
<keyword id="KW-0964">Secreted</keyword>
<keyword id="KW-0732">Signal</keyword>
<organism>
    <name type="scientific">Hypocrea jecorina (strain QM6a)</name>
    <name type="common">Trichoderma reesei</name>
    <dbReference type="NCBI Taxonomy" id="431241"/>
    <lineage>
        <taxon>Eukaryota</taxon>
        <taxon>Fungi</taxon>
        <taxon>Dikarya</taxon>
        <taxon>Ascomycota</taxon>
        <taxon>Pezizomycotina</taxon>
        <taxon>Sordariomycetes</taxon>
        <taxon>Hypocreomycetidae</taxon>
        <taxon>Hypocreales</taxon>
        <taxon>Hypocreaceae</taxon>
        <taxon>Trichoderma</taxon>
    </lineage>
</organism>
<accession>Q7Z9M7</accession>
<accession>G0RER9</accession>
<proteinExistence type="evidence at protein level"/>
<feature type="signal peptide" evidence="2">
    <location>
        <begin position="1"/>
        <end position="19"/>
    </location>
</feature>
<feature type="chain" id="PRO_0000364090" description="AA9 family lytic polysaccharide monooxygenase cel61B">
    <location>
        <begin position="20"/>
        <end position="249"/>
    </location>
</feature>
<feature type="binding site" evidence="8 9">
    <location>
        <position position="20"/>
    </location>
    <ligand>
        <name>Cu(2+)</name>
        <dbReference type="ChEBI" id="CHEBI:29036"/>
        <note>catalytic</note>
    </ligand>
</feature>
<feature type="binding site" evidence="8 9">
    <location>
        <position position="108"/>
    </location>
    <ligand>
        <name>Cu(2+)</name>
        <dbReference type="ChEBI" id="CHEBI:29036"/>
        <note>catalytic</note>
    </ligand>
</feature>
<feature type="binding site" evidence="1">
    <location>
        <position position="184"/>
    </location>
    <ligand>
        <name>O2</name>
        <dbReference type="ChEBI" id="CHEBI:15379"/>
    </ligand>
</feature>
<feature type="binding site" evidence="1">
    <location>
        <position position="193"/>
    </location>
    <ligand>
        <name>O2</name>
        <dbReference type="ChEBI" id="CHEBI:15379"/>
    </ligand>
</feature>
<feature type="binding site" evidence="8 9">
    <location>
        <position position="195"/>
    </location>
    <ligand>
        <name>Cu(2+)</name>
        <dbReference type="ChEBI" id="CHEBI:29036"/>
        <note>catalytic</note>
    </ligand>
</feature>
<feature type="glycosylation site" description="N-linked (GlcNAc...) asparagine" evidence="3">
    <location>
        <position position="25"/>
    </location>
</feature>
<feature type="disulfide bond" evidence="5 9">
    <location>
        <begin position="78"/>
        <end position="198"/>
    </location>
</feature>
<feature type="disulfide bond" evidence="5 9">
    <location>
        <begin position="120"/>
        <end position="124"/>
    </location>
</feature>
<feature type="sequence conflict" description="In Ref. 2; EGR50392." evidence="7" ref="2">
    <original>V</original>
    <variation>A</variation>
    <location>
        <position position="118"/>
    </location>
</feature>
<feature type="strand" evidence="10">
    <location>
        <begin position="22"/>
        <end position="28"/>
    </location>
</feature>
<feature type="strand" evidence="10">
    <location>
        <begin position="31"/>
        <end position="34"/>
    </location>
</feature>
<feature type="helix" evidence="10">
    <location>
        <begin position="38"/>
        <end position="47"/>
    </location>
</feature>
<feature type="helix" evidence="10">
    <location>
        <begin position="68"/>
        <end position="70"/>
    </location>
</feature>
<feature type="helix" evidence="10">
    <location>
        <begin position="75"/>
        <end position="78"/>
    </location>
</feature>
<feature type="strand" evidence="10">
    <location>
        <begin position="89"/>
        <end position="92"/>
    </location>
</feature>
<feature type="strand" evidence="10">
    <location>
        <begin position="96"/>
        <end position="104"/>
    </location>
</feature>
<feature type="strand" evidence="10">
    <location>
        <begin position="113"/>
        <end position="119"/>
    </location>
</feature>
<feature type="helix" evidence="10">
    <location>
        <begin position="124"/>
        <end position="126"/>
    </location>
</feature>
<feature type="helix" evidence="10">
    <location>
        <begin position="129"/>
        <end position="131"/>
    </location>
</feature>
<feature type="strand" evidence="10">
    <location>
        <begin position="133"/>
        <end position="140"/>
    </location>
</feature>
<feature type="turn" evidence="10">
    <location>
        <begin position="144"/>
        <end position="147"/>
    </location>
</feature>
<feature type="helix" evidence="10">
    <location>
        <begin position="150"/>
        <end position="156"/>
    </location>
</feature>
<feature type="strand" evidence="10">
    <location>
        <begin position="159"/>
        <end position="164"/>
    </location>
</feature>
<feature type="strand" evidence="10">
    <location>
        <begin position="171"/>
        <end position="182"/>
    </location>
</feature>
<feature type="turn" evidence="10">
    <location>
        <begin position="184"/>
        <end position="187"/>
    </location>
</feature>
<feature type="strand" evidence="10">
    <location>
        <begin position="193"/>
        <end position="206"/>
    </location>
</feature>
<feature type="helix" evidence="10">
    <location>
        <begin position="217"/>
        <end position="219"/>
    </location>
</feature>
<feature type="turn" evidence="10">
    <location>
        <begin position="226"/>
        <end position="228"/>
    </location>
</feature>
<feature type="strand" evidence="10">
    <location>
        <begin position="232"/>
        <end position="234"/>
    </location>
</feature>
<feature type="strand" evidence="10">
    <location>
        <begin position="242"/>
        <end position="244"/>
    </location>
</feature>
<sequence>MKSCAILAALGCLAGSVLGHGQVQNFTINGQYNQGFILDYYYQKQNTGHFPNVAGWYAEDLDLGFISPDQYTTPDIVCHKNAAPGAISATAAAGSNIVFQWGPGVWPHPYGPIVTYVVECSGSCTTVNKNNLRWVKIQEAGINYNTQVWAQQDLINQGNKWTVKIPSSLRPGNYVFRHELLAAHGASSANGMQNYPQCVNIAVTGSGTKALPAGTPATQLYKPTDPGILFNPYTTITSYTIPGPALWQG</sequence>
<evidence type="ECO:0000250" key="1">
    <source>
        <dbReference type="UniProtKB" id="Q1K8B6"/>
    </source>
</evidence>
<evidence type="ECO:0000255" key="2"/>
<evidence type="ECO:0000255" key="3">
    <source>
        <dbReference type="PROSITE-ProRule" id="PRU00498"/>
    </source>
</evidence>
<evidence type="ECO:0000269" key="4">
    <source>
    </source>
</evidence>
<evidence type="ECO:0000269" key="5">
    <source>
    </source>
</evidence>
<evidence type="ECO:0000303" key="6">
    <source>
    </source>
</evidence>
<evidence type="ECO:0000305" key="7"/>
<evidence type="ECO:0000305" key="8">
    <source>
    </source>
</evidence>
<evidence type="ECO:0007744" key="9">
    <source>
        <dbReference type="PDB" id="2VTC"/>
    </source>
</evidence>
<evidence type="ECO:0007829" key="10">
    <source>
        <dbReference type="PDB" id="2VTC"/>
    </source>
</evidence>
<comment type="function">
    <text evidence="5">Lytic polysaccharide monooxygenase (LPMO) that depolymerizes crystalline and amorphous polysaccharides via the oxidation of scissile alpha- or beta-(1-4)-glycosidic bonds, yielding C1 or C4 oxidation products (PubMed:18723026). Catalysis by LPMOs requires the reduction of the active-site copper from Cu(II) to Cu(I) by a reducing agent and H(2)O(2) or O(2) as a cosubstrate (PubMed:18723026).</text>
</comment>
<comment type="catalytic activity">
    <reaction evidence="5">
        <text>[(1-&gt;4)-beta-D-glucosyl]n+m + reduced acceptor + O2 = 4-dehydro-beta-D-glucosyl-[(1-&gt;4)-beta-D-glucosyl]n-1 + [(1-&gt;4)-beta-D-glucosyl]m + acceptor + H2O.</text>
        <dbReference type="EC" id="1.14.99.56"/>
    </reaction>
</comment>
<comment type="cofactor">
    <cofactor evidence="8">
        <name>Cu(2+)</name>
        <dbReference type="ChEBI" id="CHEBI:29036"/>
    </cofactor>
    <text evidence="8">Binds 1 copper ion per subunit.</text>
</comment>
<comment type="subunit">
    <text evidence="5">Monomer.</text>
</comment>
<comment type="subcellular location">
    <subcellularLocation>
        <location evidence="5">Secreted</location>
    </subcellularLocation>
</comment>
<comment type="induction">
    <text evidence="4">By cellulose, lactose and sophorose.</text>
</comment>
<comment type="biotechnology">
    <text evidence="7">Lignocellulose is the most abundant polymeric composite on Earth and is a recalcitrant but promising renewable substrate for industrial biotechnology applications. Together with cellobiose dehydrogenases (CDHs) an enzymatic system capable of oxidative cellulose cleavage is formed, which increases the efficiency of cellulases and put LPMOs at focus of biofuel research.</text>
</comment>
<comment type="similarity">
    <text evidence="7">Belongs to the polysaccharide monooxygenase AA9 family.</text>
</comment>
<name>LP9B_HYPJQ</name>
<dbReference type="EC" id="1.14.99.56" evidence="5"/>
<dbReference type="EMBL" id="AY281372">
    <property type="protein sequence ID" value="AAP57753.1"/>
    <property type="molecule type" value="mRNA"/>
</dbReference>
<dbReference type="EMBL" id="GL985060">
    <property type="protein sequence ID" value="EGR50392.1"/>
    <property type="molecule type" value="Genomic_DNA"/>
</dbReference>
<dbReference type="RefSeq" id="XP_006963879.1">
    <property type="nucleotide sequence ID" value="XM_006963817.1"/>
</dbReference>
<dbReference type="PDB" id="2VTC">
    <property type="method" value="X-ray"/>
    <property type="resolution" value="1.60 A"/>
    <property type="chains" value="A/B=1-249"/>
</dbReference>
<dbReference type="PDBsum" id="2VTC"/>
<dbReference type="SMR" id="Q7Z9M7"/>
<dbReference type="STRING" id="431241.Q7Z9M7"/>
<dbReference type="CAZy" id="AA9">
    <property type="family name" value="Auxiliary Activities 9"/>
</dbReference>
<dbReference type="GlyCosmos" id="Q7Z9M7">
    <property type="glycosylation" value="1 site, No reported glycans"/>
</dbReference>
<dbReference type="GeneID" id="18483009"/>
<dbReference type="KEGG" id="tre:TRIREDRAFT_120961"/>
<dbReference type="VEuPathDB" id="FungiDB:TRIREDRAFT_120961"/>
<dbReference type="eggNOG" id="ENOG502RY3D">
    <property type="taxonomic scope" value="Eukaryota"/>
</dbReference>
<dbReference type="OrthoDB" id="4849160at2759"/>
<dbReference type="BioCyc" id="MetaCyc:MONOMER-16506"/>
<dbReference type="EvolutionaryTrace" id="Q7Z9M7"/>
<dbReference type="Proteomes" id="UP000008984">
    <property type="component" value="Unassembled WGS sequence"/>
</dbReference>
<dbReference type="GO" id="GO:0005576">
    <property type="term" value="C:extracellular region"/>
    <property type="evidence" value="ECO:0007669"/>
    <property type="project" value="UniProtKB-SubCell"/>
</dbReference>
<dbReference type="GO" id="GO:0008810">
    <property type="term" value="F:cellulase activity"/>
    <property type="evidence" value="ECO:0007669"/>
    <property type="project" value="UniProtKB-EC"/>
</dbReference>
<dbReference type="GO" id="GO:0046872">
    <property type="term" value="F:metal ion binding"/>
    <property type="evidence" value="ECO:0007669"/>
    <property type="project" value="UniProtKB-KW"/>
</dbReference>
<dbReference type="GO" id="GO:0004497">
    <property type="term" value="F:monooxygenase activity"/>
    <property type="evidence" value="ECO:0007669"/>
    <property type="project" value="UniProtKB-KW"/>
</dbReference>
<dbReference type="GO" id="GO:0030245">
    <property type="term" value="P:cellulose catabolic process"/>
    <property type="evidence" value="ECO:0007669"/>
    <property type="project" value="UniProtKB-KW"/>
</dbReference>
<dbReference type="CDD" id="cd21175">
    <property type="entry name" value="LPMO_AA9"/>
    <property type="match status" value="1"/>
</dbReference>
<dbReference type="Gene3D" id="2.70.50.70">
    <property type="match status" value="1"/>
</dbReference>
<dbReference type="InterPro" id="IPR049892">
    <property type="entry name" value="AA9"/>
</dbReference>
<dbReference type="InterPro" id="IPR005103">
    <property type="entry name" value="AA9_LPMO"/>
</dbReference>
<dbReference type="PANTHER" id="PTHR33353:SF34">
    <property type="entry name" value="ENDO-BETA-1,4-GLUCANASE D"/>
    <property type="match status" value="1"/>
</dbReference>
<dbReference type="PANTHER" id="PTHR33353">
    <property type="entry name" value="PUTATIVE (AFU_ORTHOLOGUE AFUA_1G12560)-RELATED"/>
    <property type="match status" value="1"/>
</dbReference>
<dbReference type="Pfam" id="PF03443">
    <property type="entry name" value="AA9"/>
    <property type="match status" value="1"/>
</dbReference>